<dbReference type="EMBL" id="FM200053">
    <property type="protein sequence ID" value="CAR60590.1"/>
    <property type="molecule type" value="Genomic_DNA"/>
</dbReference>
<dbReference type="RefSeq" id="WP_000043266.1">
    <property type="nucleotide sequence ID" value="NC_011147.1"/>
</dbReference>
<dbReference type="SMR" id="B5BE93"/>
<dbReference type="KEGG" id="sek:SSPA2359"/>
<dbReference type="HOGENOM" id="CLU_077636_1_0_6"/>
<dbReference type="Proteomes" id="UP000001869">
    <property type="component" value="Chromosome"/>
</dbReference>
<dbReference type="GO" id="GO:0005737">
    <property type="term" value="C:cytoplasm"/>
    <property type="evidence" value="ECO:0007669"/>
    <property type="project" value="UniProtKB-SubCell"/>
</dbReference>
<dbReference type="GO" id="GO:0005840">
    <property type="term" value="C:ribosome"/>
    <property type="evidence" value="ECO:0007669"/>
    <property type="project" value="InterPro"/>
</dbReference>
<dbReference type="GO" id="GO:0043022">
    <property type="term" value="F:ribosome binding"/>
    <property type="evidence" value="ECO:0007669"/>
    <property type="project" value="InterPro"/>
</dbReference>
<dbReference type="GO" id="GO:0042274">
    <property type="term" value="P:ribosomal small subunit biogenesis"/>
    <property type="evidence" value="ECO:0007669"/>
    <property type="project" value="UniProtKB-UniRule"/>
</dbReference>
<dbReference type="GO" id="GO:0006364">
    <property type="term" value="P:rRNA processing"/>
    <property type="evidence" value="ECO:0007669"/>
    <property type="project" value="UniProtKB-UniRule"/>
</dbReference>
<dbReference type="FunFam" id="2.30.30.240:FF:000001">
    <property type="entry name" value="Ribosome maturation factor RimM"/>
    <property type="match status" value="1"/>
</dbReference>
<dbReference type="FunFam" id="2.40.30.60:FF:000001">
    <property type="entry name" value="Ribosome maturation factor RimM"/>
    <property type="match status" value="1"/>
</dbReference>
<dbReference type="Gene3D" id="2.30.30.240">
    <property type="entry name" value="PRC-barrel domain"/>
    <property type="match status" value="1"/>
</dbReference>
<dbReference type="Gene3D" id="2.40.30.60">
    <property type="entry name" value="RimM"/>
    <property type="match status" value="1"/>
</dbReference>
<dbReference type="HAMAP" id="MF_00014">
    <property type="entry name" value="Ribosome_mat_RimM"/>
    <property type="match status" value="1"/>
</dbReference>
<dbReference type="InterPro" id="IPR011033">
    <property type="entry name" value="PRC_barrel-like_sf"/>
</dbReference>
<dbReference type="InterPro" id="IPR056792">
    <property type="entry name" value="PRC_RimM"/>
</dbReference>
<dbReference type="InterPro" id="IPR011961">
    <property type="entry name" value="RimM"/>
</dbReference>
<dbReference type="InterPro" id="IPR002676">
    <property type="entry name" value="RimM_N"/>
</dbReference>
<dbReference type="InterPro" id="IPR036976">
    <property type="entry name" value="RimM_N_sf"/>
</dbReference>
<dbReference type="InterPro" id="IPR009000">
    <property type="entry name" value="Transl_B-barrel_sf"/>
</dbReference>
<dbReference type="NCBIfam" id="TIGR02273">
    <property type="entry name" value="16S_RimM"/>
    <property type="match status" value="1"/>
</dbReference>
<dbReference type="PANTHER" id="PTHR33692">
    <property type="entry name" value="RIBOSOME MATURATION FACTOR RIMM"/>
    <property type="match status" value="1"/>
</dbReference>
<dbReference type="PANTHER" id="PTHR33692:SF1">
    <property type="entry name" value="RIBOSOME MATURATION FACTOR RIMM"/>
    <property type="match status" value="1"/>
</dbReference>
<dbReference type="Pfam" id="PF24986">
    <property type="entry name" value="PRC_RimM"/>
    <property type="match status" value="1"/>
</dbReference>
<dbReference type="Pfam" id="PF01782">
    <property type="entry name" value="RimM"/>
    <property type="match status" value="1"/>
</dbReference>
<dbReference type="SUPFAM" id="SSF50346">
    <property type="entry name" value="PRC-barrel domain"/>
    <property type="match status" value="1"/>
</dbReference>
<dbReference type="SUPFAM" id="SSF50447">
    <property type="entry name" value="Translation proteins"/>
    <property type="match status" value="1"/>
</dbReference>
<comment type="function">
    <text evidence="1">An accessory protein needed during the final step in the assembly of 30S ribosomal subunit, possibly for assembly of the head region. Essential for efficient processing of 16S rRNA. May be needed both before and after RbfA during the maturation of 16S rRNA. It has affinity for free ribosomal 30S subunits but not for 70S ribosomes.</text>
</comment>
<comment type="subunit">
    <text evidence="1">Binds ribosomal protein uS19.</text>
</comment>
<comment type="subcellular location">
    <subcellularLocation>
        <location evidence="1">Cytoplasm</location>
    </subcellularLocation>
</comment>
<comment type="domain">
    <text evidence="1">The PRC barrel domain binds ribosomal protein uS19.</text>
</comment>
<comment type="similarity">
    <text evidence="1">Belongs to the RimM family.</text>
</comment>
<organism>
    <name type="scientific">Salmonella paratyphi A (strain AKU_12601)</name>
    <dbReference type="NCBI Taxonomy" id="554290"/>
    <lineage>
        <taxon>Bacteria</taxon>
        <taxon>Pseudomonadati</taxon>
        <taxon>Pseudomonadota</taxon>
        <taxon>Gammaproteobacteria</taxon>
        <taxon>Enterobacterales</taxon>
        <taxon>Enterobacteriaceae</taxon>
        <taxon>Salmonella</taxon>
    </lineage>
</organism>
<gene>
    <name evidence="1" type="primary">rimM</name>
    <name type="ordered locus">SSPA2359</name>
</gene>
<accession>B5BE93</accession>
<keyword id="KW-0143">Chaperone</keyword>
<keyword id="KW-0963">Cytoplasm</keyword>
<keyword id="KW-0690">Ribosome biogenesis</keyword>
<keyword id="KW-0698">rRNA processing</keyword>
<name>RIMM_SALPK</name>
<proteinExistence type="inferred from homology"/>
<sequence>MSKQLAAQVPAEPVVLGKMGSSYGIRGWLRVFSSTEDAESIFDYQPWFIQKAGQWQQVQLESWKHHNQDLIIKLKGVDDRDAANLLTNCEIVVDSSQLPALEEGDYYWKDLMGCQVVTAEGYDLGKVIDMMETGSNDVLVIKANLKDAFGIKERLVPFLDGQVIKKVDLATRTIEVDWDPGF</sequence>
<evidence type="ECO:0000255" key="1">
    <source>
        <dbReference type="HAMAP-Rule" id="MF_00014"/>
    </source>
</evidence>
<protein>
    <recommendedName>
        <fullName evidence="1">Ribosome maturation factor RimM</fullName>
    </recommendedName>
</protein>
<feature type="chain" id="PRO_1000089518" description="Ribosome maturation factor RimM">
    <location>
        <begin position="1"/>
        <end position="182"/>
    </location>
</feature>
<feature type="domain" description="PRC barrel" evidence="1">
    <location>
        <begin position="102"/>
        <end position="182"/>
    </location>
</feature>
<reference key="1">
    <citation type="journal article" date="2009" name="BMC Genomics">
        <title>Pseudogene accumulation in the evolutionary histories of Salmonella enterica serovars Paratyphi A and Typhi.</title>
        <authorList>
            <person name="Holt K.E."/>
            <person name="Thomson N.R."/>
            <person name="Wain J."/>
            <person name="Langridge G.C."/>
            <person name="Hasan R."/>
            <person name="Bhutta Z.A."/>
            <person name="Quail M.A."/>
            <person name="Norbertczak H."/>
            <person name="Walker D."/>
            <person name="Simmonds M."/>
            <person name="White B."/>
            <person name="Bason N."/>
            <person name="Mungall K."/>
            <person name="Dougan G."/>
            <person name="Parkhill J."/>
        </authorList>
    </citation>
    <scope>NUCLEOTIDE SEQUENCE [LARGE SCALE GENOMIC DNA]</scope>
    <source>
        <strain>AKU_12601</strain>
    </source>
</reference>